<dbReference type="EMBL" id="AE005174">
    <property type="protein sequence ID" value="AAG57324.1"/>
    <property type="molecule type" value="Genomic_DNA"/>
</dbReference>
<dbReference type="EMBL" id="BA000007">
    <property type="protein sequence ID" value="BAB36501.1"/>
    <property type="molecule type" value="Genomic_DNA"/>
</dbReference>
<dbReference type="PIR" id="F91013">
    <property type="entry name" value="F91013"/>
</dbReference>
<dbReference type="PIR" id="H85857">
    <property type="entry name" value="H85857"/>
</dbReference>
<dbReference type="RefSeq" id="NP_311105.1">
    <property type="nucleotide sequence ID" value="NC_002695.1"/>
</dbReference>
<dbReference type="RefSeq" id="WP_000050789.1">
    <property type="nucleotide sequence ID" value="NZ_VOAI01000001.1"/>
</dbReference>
<dbReference type="SMR" id="Q8XE68"/>
<dbReference type="STRING" id="155864.Z3445"/>
<dbReference type="GeneID" id="75206440"/>
<dbReference type="GeneID" id="916783"/>
<dbReference type="KEGG" id="ece:Z3445"/>
<dbReference type="KEGG" id="ecs:ECs_3078"/>
<dbReference type="PATRIC" id="fig|386585.9.peg.3210"/>
<dbReference type="eggNOG" id="COG3081">
    <property type="taxonomic scope" value="Bacteria"/>
</dbReference>
<dbReference type="HOGENOM" id="CLU_063050_0_1_6"/>
<dbReference type="OMA" id="FFMDFLA"/>
<dbReference type="Proteomes" id="UP000000558">
    <property type="component" value="Chromosome"/>
</dbReference>
<dbReference type="Proteomes" id="UP000002519">
    <property type="component" value="Chromosome"/>
</dbReference>
<dbReference type="GO" id="GO:0043590">
    <property type="term" value="C:bacterial nucleoid"/>
    <property type="evidence" value="ECO:0007669"/>
    <property type="project" value="TreeGrafter"/>
</dbReference>
<dbReference type="GO" id="GO:0005737">
    <property type="term" value="C:cytoplasm"/>
    <property type="evidence" value="ECO:0007669"/>
    <property type="project" value="UniProtKB-UniRule"/>
</dbReference>
<dbReference type="GO" id="GO:0003690">
    <property type="term" value="F:double-stranded DNA binding"/>
    <property type="evidence" value="ECO:0007669"/>
    <property type="project" value="TreeGrafter"/>
</dbReference>
<dbReference type="GO" id="GO:0003727">
    <property type="term" value="F:single-stranded RNA binding"/>
    <property type="evidence" value="ECO:0007669"/>
    <property type="project" value="TreeGrafter"/>
</dbReference>
<dbReference type="HAMAP" id="MF_00730">
    <property type="entry name" value="NdpA"/>
    <property type="match status" value="1"/>
</dbReference>
<dbReference type="InterPro" id="IPR007358">
    <property type="entry name" value="Nucleoid_associated_NdpA"/>
</dbReference>
<dbReference type="NCBIfam" id="NF001557">
    <property type="entry name" value="PRK00378.1"/>
    <property type="match status" value="1"/>
</dbReference>
<dbReference type="PANTHER" id="PTHR38772">
    <property type="match status" value="1"/>
</dbReference>
<dbReference type="PANTHER" id="PTHR38772:SF1">
    <property type="entry name" value="NUCLEOID-ASSOCIATED PROTEIN YEJK"/>
    <property type="match status" value="1"/>
</dbReference>
<dbReference type="Pfam" id="PF04245">
    <property type="entry name" value="NA37"/>
    <property type="match status" value="1"/>
</dbReference>
<organism>
    <name type="scientific">Escherichia coli O157:H7</name>
    <dbReference type="NCBI Taxonomy" id="83334"/>
    <lineage>
        <taxon>Bacteria</taxon>
        <taxon>Pseudomonadati</taxon>
        <taxon>Pseudomonadota</taxon>
        <taxon>Gammaproteobacteria</taxon>
        <taxon>Enterobacterales</taxon>
        <taxon>Enterobacteriaceae</taxon>
        <taxon>Escherichia</taxon>
    </lineage>
</organism>
<gene>
    <name evidence="2" type="primary">yejK</name>
    <name type="ordered locus">Z3445</name>
    <name type="ordered locus">ECs3078</name>
</gene>
<reference key="1">
    <citation type="journal article" date="2001" name="Nature">
        <title>Genome sequence of enterohaemorrhagic Escherichia coli O157:H7.</title>
        <authorList>
            <person name="Perna N.T."/>
            <person name="Plunkett G. III"/>
            <person name="Burland V."/>
            <person name="Mau B."/>
            <person name="Glasner J.D."/>
            <person name="Rose D.J."/>
            <person name="Mayhew G.F."/>
            <person name="Evans P.S."/>
            <person name="Gregor J."/>
            <person name="Kirkpatrick H.A."/>
            <person name="Posfai G."/>
            <person name="Hackett J."/>
            <person name="Klink S."/>
            <person name="Boutin A."/>
            <person name="Shao Y."/>
            <person name="Miller L."/>
            <person name="Grotbeck E.J."/>
            <person name="Davis N.W."/>
            <person name="Lim A."/>
            <person name="Dimalanta E.T."/>
            <person name="Potamousis K."/>
            <person name="Apodaca J."/>
            <person name="Anantharaman T.S."/>
            <person name="Lin J."/>
            <person name="Yen G."/>
            <person name="Schwartz D.C."/>
            <person name="Welch R.A."/>
            <person name="Blattner F.R."/>
        </authorList>
    </citation>
    <scope>NUCLEOTIDE SEQUENCE [LARGE SCALE GENOMIC DNA]</scope>
    <source>
        <strain>O157:H7 / EDL933 / ATCC 700927 / EHEC</strain>
    </source>
</reference>
<reference key="2">
    <citation type="journal article" date="2001" name="DNA Res.">
        <title>Complete genome sequence of enterohemorrhagic Escherichia coli O157:H7 and genomic comparison with a laboratory strain K-12.</title>
        <authorList>
            <person name="Hayashi T."/>
            <person name="Makino K."/>
            <person name="Ohnishi M."/>
            <person name="Kurokawa K."/>
            <person name="Ishii K."/>
            <person name="Yokoyama K."/>
            <person name="Han C.-G."/>
            <person name="Ohtsubo E."/>
            <person name="Nakayama K."/>
            <person name="Murata T."/>
            <person name="Tanaka M."/>
            <person name="Tobe T."/>
            <person name="Iida T."/>
            <person name="Takami H."/>
            <person name="Honda T."/>
            <person name="Sasakawa C."/>
            <person name="Ogasawara N."/>
            <person name="Yasunaga T."/>
            <person name="Kuhara S."/>
            <person name="Shiba T."/>
            <person name="Hattori M."/>
            <person name="Shinagawa H."/>
        </authorList>
    </citation>
    <scope>NUCLEOTIDE SEQUENCE [LARGE SCALE GENOMIC DNA]</scope>
    <source>
        <strain>O157:H7 / Sakai / RIMD 0509952 / EHEC</strain>
    </source>
</reference>
<proteinExistence type="inferred from homology"/>
<feature type="initiator methionine" description="Removed" evidence="1">
    <location>
        <position position="1"/>
    </location>
</feature>
<feature type="chain" id="PRO_0000210906" description="Nucleoid-associated protein YejK">
    <location>
        <begin position="2"/>
        <end position="335"/>
    </location>
</feature>
<protein>
    <recommendedName>
        <fullName evidence="2">Nucleoid-associated protein YejK</fullName>
    </recommendedName>
</protein>
<name>NDPA_ECO57</name>
<evidence type="ECO:0000250" key="1"/>
<evidence type="ECO:0000255" key="2">
    <source>
        <dbReference type="HAMAP-Rule" id="MF_00730"/>
    </source>
</evidence>
<accession>Q8XE68</accession>
<sequence length="335" mass="37823">MSLDINQIALHQLIKRDEQNLELVLRDSLLEPTETVVEMVAELHRVYSAKNKAYGLFSEESELAQTLRLQRQGEEDFLAFSRAATGRLRDELAKYPFADGGFVLFCHYRYLAVEYLLVAVLSNLSSMRVNENLDINPTHYLDINHADIVARIDLTEWETNPESTRYLTFLKGRVGRKVADFFMDFLGASEGLNAKAQNRGLLQAVDDFTAEAQLDKAERQNVRQQVYSYCNEQLQAGEEIELESLSKELAGVSEVSFTEFAAEKGYELEESFPADRSTLRQLTKFAGSGGGLTINFDAMLLGERIFWDPATDTLTIKGTPPNLRDQLQRRTSGGN</sequence>
<keyword id="KW-0963">Cytoplasm</keyword>
<keyword id="KW-1185">Reference proteome</keyword>
<comment type="subcellular location">
    <subcellularLocation>
        <location evidence="2">Cytoplasm</location>
        <location evidence="2">Nucleoid</location>
    </subcellularLocation>
</comment>
<comment type="similarity">
    <text evidence="2">Belongs to the YejK family.</text>
</comment>